<keyword id="KW-0007">Acetylation</keyword>
<keyword id="KW-0067">ATP-binding</keyword>
<keyword id="KW-0963">Cytoplasm</keyword>
<keyword id="KW-0903">Direct protein sequencing</keyword>
<keyword id="KW-0418">Kinase</keyword>
<keyword id="KW-0547">Nucleotide-binding</keyword>
<keyword id="KW-1185">Reference proteome</keyword>
<keyword id="KW-0808">Transferase</keyword>
<organism>
    <name type="scientific">Sus scrofa</name>
    <name type="common">Pig</name>
    <dbReference type="NCBI Taxonomy" id="9823"/>
    <lineage>
        <taxon>Eukaryota</taxon>
        <taxon>Metazoa</taxon>
        <taxon>Chordata</taxon>
        <taxon>Craniata</taxon>
        <taxon>Vertebrata</taxon>
        <taxon>Euteleostomi</taxon>
        <taxon>Mammalia</taxon>
        <taxon>Eutheria</taxon>
        <taxon>Laurasiatheria</taxon>
        <taxon>Artiodactyla</taxon>
        <taxon>Suina</taxon>
        <taxon>Suidae</taxon>
        <taxon>Sus</taxon>
    </lineage>
</organism>
<gene>
    <name type="primary">GUK1</name>
    <name type="synonym">GUK</name>
</gene>
<name>KGUA_PIG</name>
<sequence>MGSPRPVVLSGPSGAGKSTLLKKLLQEHSSIFGFSVSHTTRDPRPGEENGKDYYFVTREVMQRDIAAGDFIEHAEFSGNLYGTSKAAVRAVQAMNRICVLDVDLQGVRNIKKTDLQPIYIFVQPPSLDVLEQRLRQRNTETEESLAKRLAAAKADMESSKEPGLFDLIIINDSLDKAYWALKEALSEEIKKAQATGHS</sequence>
<feature type="initiator methionine" description="Removed" evidence="5">
    <location>
        <position position="1"/>
    </location>
</feature>
<feature type="chain" id="PRO_0000170653" description="Guanylate kinase">
    <location>
        <begin position="2"/>
        <end position="198"/>
    </location>
</feature>
<feature type="domain" description="Guanylate kinase-like" evidence="3">
    <location>
        <begin position="4"/>
        <end position="186"/>
    </location>
</feature>
<feature type="active site" evidence="2">
    <location>
        <position position="44"/>
    </location>
</feature>
<feature type="active site" evidence="2">
    <location>
        <position position="137"/>
    </location>
</feature>
<feature type="active site" evidence="2">
    <location>
        <position position="148"/>
    </location>
</feature>
<feature type="binding site" evidence="2">
    <location>
        <begin position="14"/>
        <end position="19"/>
    </location>
    <ligand>
        <name>ATP</name>
        <dbReference type="ChEBI" id="CHEBI:30616"/>
    </ligand>
</feature>
<feature type="binding site" evidence="2">
    <location>
        <begin position="37"/>
        <end position="51"/>
    </location>
    <ligand>
        <name>substrate</name>
    </ligand>
</feature>
<feature type="binding site" evidence="2">
    <location>
        <begin position="171"/>
        <end position="172"/>
    </location>
    <ligand>
        <name>ATP</name>
        <dbReference type="ChEBI" id="CHEBI:30616"/>
    </ligand>
</feature>
<feature type="modified residue" description="N-acetylglycine" evidence="5">
    <location>
        <position position="2"/>
    </location>
</feature>
<accession>P31006</accession>
<protein>
    <recommendedName>
        <fullName>Guanylate kinase</fullName>
        <ecNumber evidence="4">2.7.4.8</ecNumber>
    </recommendedName>
    <alternativeName>
        <fullName>GMP kinase</fullName>
    </alternativeName>
</protein>
<evidence type="ECO:0000250" key="1">
    <source>
        <dbReference type="UniProtKB" id="Q16774"/>
    </source>
</evidence>
<evidence type="ECO:0000250" key="2">
    <source>
        <dbReference type="UniProtKB" id="Q64520"/>
    </source>
</evidence>
<evidence type="ECO:0000255" key="3">
    <source>
        <dbReference type="PROSITE-ProRule" id="PRU00100"/>
    </source>
</evidence>
<evidence type="ECO:0000269" key="4">
    <source>
    </source>
</evidence>
<evidence type="ECO:0000269" key="5">
    <source>
    </source>
</evidence>
<evidence type="ECO:0000305" key="6"/>
<reference key="1">
    <citation type="journal article" date="1993" name="Eur. J. Biochem.">
        <title>Purification and sequence determination of guanylate kinase from pig brain.</title>
        <authorList>
            <person name="Zschocke P.D."/>
            <person name="Schiltz E."/>
            <person name="Schulz G.E."/>
        </authorList>
    </citation>
    <scope>PROTEIN SEQUENCE OF 2-198</scope>
    <scope>ACETYLATION AT GLY-2</scope>
    <scope>SUBUNIT</scope>
    <source>
        <tissue>Brain</tissue>
    </source>
</reference>
<reference key="2">
    <citation type="journal article" date="2018" name="Front. Mol. Neurosci.">
        <title>Control of the Nucleotide Cycle in Photoreceptor Cell Extracts by Retinal Degeneration Protein 3.</title>
        <authorList>
            <person name="Wimberg H."/>
            <person name="Janssen-Bienhold U."/>
            <person name="Koch K.W."/>
        </authorList>
    </citation>
    <scope>FUNCTION</scope>
    <scope>INTERACTION WITH RD3</scope>
    <scope>CATALYTIC ACTIVITY</scope>
    <scope>ACTIVITY REGULATION</scope>
</reference>
<dbReference type="EC" id="2.7.4.8" evidence="4"/>
<dbReference type="PIR" id="S23776">
    <property type="entry name" value="KIPGGU"/>
</dbReference>
<dbReference type="SMR" id="P31006"/>
<dbReference type="FunCoup" id="P31006">
    <property type="interactions" value="1808"/>
</dbReference>
<dbReference type="STRING" id="9823.ENSSSCP00000035398"/>
<dbReference type="iPTMnet" id="P31006"/>
<dbReference type="PaxDb" id="9823-ENSSSCP00000014875"/>
<dbReference type="PeptideAtlas" id="P31006"/>
<dbReference type="eggNOG" id="KOG0707">
    <property type="taxonomic scope" value="Eukaryota"/>
</dbReference>
<dbReference type="InParanoid" id="P31006"/>
<dbReference type="Proteomes" id="UP000008227">
    <property type="component" value="Unplaced"/>
</dbReference>
<dbReference type="Proteomes" id="UP000314985">
    <property type="component" value="Unplaced"/>
</dbReference>
<dbReference type="Proteomes" id="UP000694570">
    <property type="component" value="Unplaced"/>
</dbReference>
<dbReference type="Proteomes" id="UP000694571">
    <property type="component" value="Unplaced"/>
</dbReference>
<dbReference type="Proteomes" id="UP000694720">
    <property type="component" value="Unplaced"/>
</dbReference>
<dbReference type="Proteomes" id="UP000694722">
    <property type="component" value="Unplaced"/>
</dbReference>
<dbReference type="Proteomes" id="UP000694723">
    <property type="component" value="Unplaced"/>
</dbReference>
<dbReference type="Proteomes" id="UP000694724">
    <property type="component" value="Unplaced"/>
</dbReference>
<dbReference type="Proteomes" id="UP000694725">
    <property type="component" value="Unplaced"/>
</dbReference>
<dbReference type="Proteomes" id="UP000694726">
    <property type="component" value="Unplaced"/>
</dbReference>
<dbReference type="Proteomes" id="UP000694727">
    <property type="component" value="Unplaced"/>
</dbReference>
<dbReference type="Proteomes" id="UP000694728">
    <property type="component" value="Unplaced"/>
</dbReference>
<dbReference type="GO" id="GO:0005829">
    <property type="term" value="C:cytosol"/>
    <property type="evidence" value="ECO:0000250"/>
    <property type="project" value="UniProtKB"/>
</dbReference>
<dbReference type="GO" id="GO:0001917">
    <property type="term" value="C:photoreceptor inner segment"/>
    <property type="evidence" value="ECO:0000250"/>
    <property type="project" value="UniProtKB"/>
</dbReference>
<dbReference type="GO" id="GO:0005524">
    <property type="term" value="F:ATP binding"/>
    <property type="evidence" value="ECO:0000250"/>
    <property type="project" value="UniProtKB"/>
</dbReference>
<dbReference type="GO" id="GO:0004385">
    <property type="term" value="F:guanylate kinase activity"/>
    <property type="evidence" value="ECO:0000250"/>
    <property type="project" value="UniProtKB"/>
</dbReference>
<dbReference type="GO" id="GO:0050145">
    <property type="term" value="F:nucleoside monophosphate kinase activity"/>
    <property type="evidence" value="ECO:0000269"/>
    <property type="project" value="Reactome"/>
</dbReference>
<dbReference type="GO" id="GO:0006163">
    <property type="term" value="P:purine nucleotide metabolic process"/>
    <property type="evidence" value="ECO:0000250"/>
    <property type="project" value="UniProtKB"/>
</dbReference>
<dbReference type="CDD" id="cd00071">
    <property type="entry name" value="GMPK"/>
    <property type="match status" value="1"/>
</dbReference>
<dbReference type="FunFam" id="3.30.63.10:FF:000002">
    <property type="entry name" value="Guanylate kinase 1"/>
    <property type="match status" value="1"/>
</dbReference>
<dbReference type="FunFam" id="3.40.50.300:FF:000879">
    <property type="entry name" value="Guanylate kinase 1"/>
    <property type="match status" value="1"/>
</dbReference>
<dbReference type="Gene3D" id="3.30.63.10">
    <property type="entry name" value="Guanylate Kinase phosphate binding domain"/>
    <property type="match status" value="1"/>
</dbReference>
<dbReference type="Gene3D" id="3.40.50.300">
    <property type="entry name" value="P-loop containing nucleotide triphosphate hydrolases"/>
    <property type="match status" value="1"/>
</dbReference>
<dbReference type="InterPro" id="IPR008145">
    <property type="entry name" value="GK/Ca_channel_bsu"/>
</dbReference>
<dbReference type="InterPro" id="IPR008144">
    <property type="entry name" value="Guanylate_kin-like_dom"/>
</dbReference>
<dbReference type="InterPro" id="IPR017665">
    <property type="entry name" value="Guanylate_kinase"/>
</dbReference>
<dbReference type="InterPro" id="IPR020590">
    <property type="entry name" value="Guanylate_kinase_CS"/>
</dbReference>
<dbReference type="InterPro" id="IPR027417">
    <property type="entry name" value="P-loop_NTPase"/>
</dbReference>
<dbReference type="NCBIfam" id="TIGR03263">
    <property type="entry name" value="guanyl_kin"/>
    <property type="match status" value="1"/>
</dbReference>
<dbReference type="PANTHER" id="PTHR23117:SF13">
    <property type="entry name" value="GUANYLATE KINASE"/>
    <property type="match status" value="1"/>
</dbReference>
<dbReference type="PANTHER" id="PTHR23117">
    <property type="entry name" value="GUANYLATE KINASE-RELATED"/>
    <property type="match status" value="1"/>
</dbReference>
<dbReference type="Pfam" id="PF00625">
    <property type="entry name" value="Guanylate_kin"/>
    <property type="match status" value="1"/>
</dbReference>
<dbReference type="SMART" id="SM00072">
    <property type="entry name" value="GuKc"/>
    <property type="match status" value="1"/>
</dbReference>
<dbReference type="SUPFAM" id="SSF52540">
    <property type="entry name" value="P-loop containing nucleoside triphosphate hydrolases"/>
    <property type="match status" value="1"/>
</dbReference>
<dbReference type="PROSITE" id="PS00856">
    <property type="entry name" value="GUANYLATE_KINASE_1"/>
    <property type="match status" value="1"/>
</dbReference>
<dbReference type="PROSITE" id="PS50052">
    <property type="entry name" value="GUANYLATE_KINASE_2"/>
    <property type="match status" value="1"/>
</dbReference>
<proteinExistence type="evidence at protein level"/>
<comment type="function">
    <text evidence="4">Catalyzes the phosphorylation of GMP to GDP. Essential enzyme for recycling GMP and indirectly, cyclic GMP (cGMP). Involved in the cGMP metabolism in photoreceptors.</text>
</comment>
<comment type="catalytic activity">
    <reaction evidence="4">
        <text>GMP + ATP = GDP + ADP</text>
        <dbReference type="Rhea" id="RHEA:20780"/>
        <dbReference type="ChEBI" id="CHEBI:30616"/>
        <dbReference type="ChEBI" id="CHEBI:58115"/>
        <dbReference type="ChEBI" id="CHEBI:58189"/>
        <dbReference type="ChEBI" id="CHEBI:456216"/>
        <dbReference type="EC" id="2.7.4.8"/>
    </reaction>
</comment>
<comment type="activity regulation">
    <text evidence="4">Up-regulated by RD3.</text>
</comment>
<comment type="subunit">
    <text evidence="1 5">Monomer (PubMed:8097461). Interacts with RD3 (By similarity).</text>
</comment>
<comment type="subcellular location">
    <subcellularLocation>
        <location evidence="2">Photoreceptor inner segment</location>
    </subcellularLocation>
    <subcellularLocation>
        <location evidence="2">Cytoplasm</location>
        <location evidence="2">Cytosol</location>
    </subcellularLocation>
    <text evidence="2">Colocalizes with RD3 in photoreceptor inner segments and to a lesser extent in the outer plexiform layer.</text>
</comment>
<comment type="similarity">
    <text evidence="6">Belongs to the guanylate kinase family.</text>
</comment>